<reference key="1">
    <citation type="journal article" date="2001" name="Nature">
        <title>Genome sequence and gene compaction of the eukaryote parasite Encephalitozoon cuniculi.</title>
        <authorList>
            <person name="Katinka M.D."/>
            <person name="Duprat S."/>
            <person name="Cornillot E."/>
            <person name="Metenier G."/>
            <person name="Thomarat F."/>
            <person name="Prensier G."/>
            <person name="Barbe V."/>
            <person name="Peyretaillade E."/>
            <person name="Brottier P."/>
            <person name="Wincker P."/>
            <person name="Delbac F."/>
            <person name="El Alaoui H."/>
            <person name="Peyret P."/>
            <person name="Saurin W."/>
            <person name="Gouy M."/>
            <person name="Weissenbach J."/>
            <person name="Vivares C.P."/>
        </authorList>
    </citation>
    <scope>NUCLEOTIDE SEQUENCE [LARGE SCALE GENOMIC DNA]</scope>
    <source>
        <strain>GB-M1</strain>
    </source>
</reference>
<reference key="2">
    <citation type="journal article" date="2009" name="BMC Genomics">
        <title>Identification of transcriptional signals in Encephalitozoon cuniculi widespread among Microsporidia phylum: support for accurate structural genome annotation.</title>
        <authorList>
            <person name="Peyretaillade E."/>
            <person name="Goncalves O."/>
            <person name="Terrat S."/>
            <person name="Dugat-Bony E."/>
            <person name="Wincker P."/>
            <person name="Cornman R.S."/>
            <person name="Evans J.D."/>
            <person name="Delbac F."/>
            <person name="Peyret P."/>
        </authorList>
    </citation>
    <scope>GENOME REANNOTATION</scope>
    <source>
        <strain>GB-M1</strain>
    </source>
</reference>
<reference key="3">
    <citation type="journal article" date="2006" name="Proteomics">
        <title>Proteomic analysis of the eukaryotic parasite Encephalitozoon cuniculi (microsporidia): a reference map for proteins expressed in late sporogonial stages.</title>
        <authorList>
            <person name="Brosson D."/>
            <person name="Kuhn L."/>
            <person name="Delbac F."/>
            <person name="Garin J."/>
            <person name="Vivares C.P."/>
            <person name="Texier C."/>
        </authorList>
    </citation>
    <scope>IDENTIFICATION BY MASS SPECTROMETRY [LARGE SCALE ANALYSIS]</scope>
    <scope>DEVELOPMENTAL STAGE</scope>
</reference>
<evidence type="ECO:0000250" key="1"/>
<evidence type="ECO:0000255" key="2">
    <source>
        <dbReference type="PROSITE-ProRule" id="PRU00809"/>
    </source>
</evidence>
<evidence type="ECO:0000269" key="3">
    <source>
    </source>
</evidence>
<keyword id="KW-0963">Cytoplasm</keyword>
<keyword id="KW-0539">Nucleus</keyword>
<keyword id="KW-0647">Proteasome</keyword>
<keyword id="KW-1185">Reference proteome</keyword>
<proteinExistence type="evidence at protein level"/>
<comment type="function">
    <text evidence="1">Non-catalytic component of the proteasome which degrades poly-ubiquitinated proteins in the cytoplasm and in the nucleus. It is essential for the regulated turnover of proteins and for the removal of misfolded proteins. The proteasome is a multicatalytic proteinase complex that is characterized by its ability to cleave peptides with Arg, Phe, Tyr, Leu, and Glu adjacent to the leaving group at neutral or slightly basic pH. It has an ATP-dependent proteolytic activity (By similarity).</text>
</comment>
<comment type="subunit">
    <text evidence="1">The 26S proteasome consists of a 20S proteasome core and two 19S regulatory subunits. The 20S proteasome core is composed of 28 subunits that are arranged in four stacked rings, resulting in a barrel-shaped structure. The two end rings are each formed by seven alpha subunits, and the two central rings are each formed by seven beta subunits. The catalytic chamber with the active sites is on the inside of the barrel (By similarity).</text>
</comment>
<comment type="subcellular location">
    <subcellularLocation>
        <location evidence="2">Cytoplasm</location>
    </subcellularLocation>
    <subcellularLocation>
        <location evidence="1">Nucleus</location>
    </subcellularLocation>
</comment>
<comment type="developmental stage">
    <text evidence="3">Expressed in late sporogonial stages.</text>
</comment>
<comment type="similarity">
    <text evidence="2">Belongs to the peptidase T1B family.</text>
</comment>
<feature type="chain" id="PRO_0000382759" description="Probable proteasome subunit beta type-7">
    <location>
        <begin position="1"/>
        <end position="226"/>
    </location>
</feature>
<name>PSB7_ENCCU</name>
<organism>
    <name type="scientific">Encephalitozoon cuniculi (strain GB-M1)</name>
    <name type="common">Microsporidian parasite</name>
    <dbReference type="NCBI Taxonomy" id="284813"/>
    <lineage>
        <taxon>Eukaryota</taxon>
        <taxon>Fungi</taxon>
        <taxon>Fungi incertae sedis</taxon>
        <taxon>Microsporidia</taxon>
        <taxon>Unikaryonidae</taxon>
        <taxon>Encephalitozoon</taxon>
    </lineage>
</organism>
<gene>
    <name type="primary">PRE4</name>
    <name type="ordered locus">ECU05_0290</name>
</gene>
<dbReference type="EMBL" id="AL590445">
    <property type="protein sequence ID" value="CAD26546.2"/>
    <property type="molecule type" value="Genomic_DNA"/>
</dbReference>
<dbReference type="RefSeq" id="NP_597369.1">
    <property type="nucleotide sequence ID" value="NM_001041235.1"/>
</dbReference>
<dbReference type="SMR" id="Q8SS01"/>
<dbReference type="FunCoup" id="Q8SS01">
    <property type="interactions" value="368"/>
</dbReference>
<dbReference type="STRING" id="284813.Q8SS01"/>
<dbReference type="GeneID" id="859033"/>
<dbReference type="KEGG" id="ecu:ECU05_0290"/>
<dbReference type="VEuPathDB" id="MicrosporidiaDB:ECU05_0290"/>
<dbReference type="HOGENOM" id="CLU_072435_1_0_1"/>
<dbReference type="InParanoid" id="Q8SS01"/>
<dbReference type="OrthoDB" id="10248542at2759"/>
<dbReference type="Proteomes" id="UP000000819">
    <property type="component" value="Chromosome V"/>
</dbReference>
<dbReference type="GO" id="GO:0005737">
    <property type="term" value="C:cytoplasm"/>
    <property type="evidence" value="ECO:0007669"/>
    <property type="project" value="UniProtKB-SubCell"/>
</dbReference>
<dbReference type="GO" id="GO:0005634">
    <property type="term" value="C:nucleus"/>
    <property type="evidence" value="ECO:0007669"/>
    <property type="project" value="UniProtKB-SubCell"/>
</dbReference>
<dbReference type="GO" id="GO:0019774">
    <property type="term" value="C:proteasome core complex, beta-subunit complex"/>
    <property type="evidence" value="ECO:0000250"/>
    <property type="project" value="UniProtKB"/>
</dbReference>
<dbReference type="GO" id="GO:0051603">
    <property type="term" value="P:proteolysis involved in protein catabolic process"/>
    <property type="evidence" value="ECO:0007669"/>
    <property type="project" value="InterPro"/>
</dbReference>
<dbReference type="FunFam" id="3.60.20.10:FF:000074">
    <property type="entry name" value="Proteasome subunit beta"/>
    <property type="match status" value="1"/>
</dbReference>
<dbReference type="Gene3D" id="3.60.20.10">
    <property type="entry name" value="Glutamine Phosphoribosylpyrophosphate, subunit 1, domain 1"/>
    <property type="match status" value="1"/>
</dbReference>
<dbReference type="InterPro" id="IPR029055">
    <property type="entry name" value="Ntn_hydrolases_N"/>
</dbReference>
<dbReference type="InterPro" id="IPR016295">
    <property type="entry name" value="Proteasome_beta4"/>
</dbReference>
<dbReference type="InterPro" id="IPR016050">
    <property type="entry name" value="Proteasome_bsu_CS"/>
</dbReference>
<dbReference type="InterPro" id="IPR001353">
    <property type="entry name" value="Proteasome_sua/b"/>
</dbReference>
<dbReference type="InterPro" id="IPR023333">
    <property type="entry name" value="Proteasome_suB-type"/>
</dbReference>
<dbReference type="PANTHER" id="PTHR32194">
    <property type="entry name" value="METALLOPROTEASE TLDD"/>
    <property type="match status" value="1"/>
</dbReference>
<dbReference type="PANTHER" id="PTHR32194:SF6">
    <property type="entry name" value="PROTEASOME SUBUNIT BETA"/>
    <property type="match status" value="1"/>
</dbReference>
<dbReference type="Pfam" id="PF00227">
    <property type="entry name" value="Proteasome"/>
    <property type="match status" value="1"/>
</dbReference>
<dbReference type="PIRSF" id="PIRSF001213">
    <property type="entry name" value="Psome_endopept_beta"/>
    <property type="match status" value="1"/>
</dbReference>
<dbReference type="SUPFAM" id="SSF56235">
    <property type="entry name" value="N-terminal nucleophile aminohydrolases (Ntn hydrolases)"/>
    <property type="match status" value="1"/>
</dbReference>
<dbReference type="PROSITE" id="PS00854">
    <property type="entry name" value="PROTEASOME_BETA_1"/>
    <property type="match status" value="1"/>
</dbReference>
<dbReference type="PROSITE" id="PS51476">
    <property type="entry name" value="PROTEASOME_BETA_2"/>
    <property type="match status" value="1"/>
</dbReference>
<sequence>MRDFVTGTTVVSFRYRDGIIMGADTRGSYGRLAKLSGVQRIFKVGDQTLLGMSGEISDMQYLVKTLTILTQEDNRRIDPKGYHKMIQRILYSARSKISPLNLSVCVGGLNAASDGDRRTHTREKMLGCVNHLGNFYFSDVVCTGIGGYLVLPFLRNRVEGREEEIAREEAIGLVEEAMRILCYRDCNASNEIQVGYVDDQGVHISDPYQIKTNWDVGLREDEIVIE</sequence>
<protein>
    <recommendedName>
        <fullName>Probable proteasome subunit beta type-7</fullName>
    </recommendedName>
    <alternativeName>
        <fullName>26S proteasome beta-type subunit PRE4</fullName>
    </alternativeName>
    <alternativeName>
        <fullName>Multicatalytic endopeptidase complex subunit PRE4</fullName>
    </alternativeName>
</protein>
<accession>Q8SS01</accession>